<sequence>MIDKERIKAAVRELLIGIGEDPDREGLLETPDRVARMCEEIFAGLHQDPKSVVKVFQEENHEEMVMVKDIPIYSICEHHLLPFIGVAHVVYIPRKGKIMGLSKLARIVDIIARKPQLQERLGSEVANVIMESINPLGVAVVVEAEHLCMTMRGIKKAGSKTVTSALRGIIKTDARTRAEVMALINGR</sequence>
<proteinExistence type="inferred from homology"/>
<protein>
    <recommendedName>
        <fullName evidence="2">GTP cyclohydrolase 1</fullName>
        <ecNumber evidence="2">3.5.4.16</ecNumber>
    </recommendedName>
    <alternativeName>
        <fullName evidence="2">GTP cyclohydrolase I</fullName>
        <shortName evidence="2">GTP-CH-I</shortName>
    </alternativeName>
</protein>
<evidence type="ECO:0000250" key="1"/>
<evidence type="ECO:0000255" key="2">
    <source>
        <dbReference type="HAMAP-Rule" id="MF_00223"/>
    </source>
</evidence>
<comment type="catalytic activity">
    <reaction evidence="2">
        <text>GTP + H2O = 7,8-dihydroneopterin 3'-triphosphate + formate + H(+)</text>
        <dbReference type="Rhea" id="RHEA:17473"/>
        <dbReference type="ChEBI" id="CHEBI:15377"/>
        <dbReference type="ChEBI" id="CHEBI:15378"/>
        <dbReference type="ChEBI" id="CHEBI:15740"/>
        <dbReference type="ChEBI" id="CHEBI:37565"/>
        <dbReference type="ChEBI" id="CHEBI:58462"/>
        <dbReference type="EC" id="3.5.4.16"/>
    </reaction>
</comment>
<comment type="pathway">
    <text evidence="2">Cofactor biosynthesis; 7,8-dihydroneopterin triphosphate biosynthesis; 7,8-dihydroneopterin triphosphate from GTP: step 1/1.</text>
</comment>
<comment type="subunit">
    <text evidence="1">Toroid-shaped homodecamer, composed of two pentamers of five dimers.</text>
</comment>
<comment type="similarity">
    <text evidence="2">Belongs to the GTP cyclohydrolase I family.</text>
</comment>
<name>GCH1_ACET2</name>
<gene>
    <name evidence="2" type="primary">folE</name>
    <name type="ordered locus">Cthe_2203</name>
</gene>
<organism>
    <name type="scientific">Acetivibrio thermocellus (strain ATCC 27405 / DSM 1237 / JCM 9322 / NBRC 103400 / NCIMB 10682 / NRRL B-4536 / VPI 7372)</name>
    <name type="common">Clostridium thermocellum</name>
    <dbReference type="NCBI Taxonomy" id="203119"/>
    <lineage>
        <taxon>Bacteria</taxon>
        <taxon>Bacillati</taxon>
        <taxon>Bacillota</taxon>
        <taxon>Clostridia</taxon>
        <taxon>Eubacteriales</taxon>
        <taxon>Oscillospiraceae</taxon>
        <taxon>Acetivibrio</taxon>
    </lineage>
</organism>
<accession>A3DHH6</accession>
<reference key="1">
    <citation type="submission" date="2007-02" db="EMBL/GenBank/DDBJ databases">
        <title>Complete sequence of Clostridium thermocellum ATCC 27405.</title>
        <authorList>
            <consortium name="US DOE Joint Genome Institute"/>
            <person name="Copeland A."/>
            <person name="Lucas S."/>
            <person name="Lapidus A."/>
            <person name="Barry K."/>
            <person name="Detter J.C."/>
            <person name="Glavina del Rio T."/>
            <person name="Hammon N."/>
            <person name="Israni S."/>
            <person name="Dalin E."/>
            <person name="Tice H."/>
            <person name="Pitluck S."/>
            <person name="Chertkov O."/>
            <person name="Brettin T."/>
            <person name="Bruce D."/>
            <person name="Han C."/>
            <person name="Tapia R."/>
            <person name="Gilna P."/>
            <person name="Schmutz J."/>
            <person name="Larimer F."/>
            <person name="Land M."/>
            <person name="Hauser L."/>
            <person name="Kyrpides N."/>
            <person name="Mikhailova N."/>
            <person name="Wu J.H.D."/>
            <person name="Newcomb M."/>
            <person name="Richardson P."/>
        </authorList>
    </citation>
    <scope>NUCLEOTIDE SEQUENCE [LARGE SCALE GENOMIC DNA]</scope>
    <source>
        <strain>ATCC 27405 / DSM 1237 / JCM 9322 / NBRC 103400 / NCIMB 10682 / NRRL B-4536 / VPI 7372</strain>
    </source>
</reference>
<keyword id="KW-0342">GTP-binding</keyword>
<keyword id="KW-0378">Hydrolase</keyword>
<keyword id="KW-0479">Metal-binding</keyword>
<keyword id="KW-0547">Nucleotide-binding</keyword>
<keyword id="KW-0554">One-carbon metabolism</keyword>
<keyword id="KW-1185">Reference proteome</keyword>
<keyword id="KW-0862">Zinc</keyword>
<dbReference type="EC" id="3.5.4.16" evidence="2"/>
<dbReference type="EMBL" id="CP000568">
    <property type="protein sequence ID" value="ABN53405.1"/>
    <property type="molecule type" value="Genomic_DNA"/>
</dbReference>
<dbReference type="RefSeq" id="WP_003513649.1">
    <property type="nucleotide sequence ID" value="NC_009012.1"/>
</dbReference>
<dbReference type="SMR" id="A3DHH6"/>
<dbReference type="STRING" id="203119.Cthe_2203"/>
<dbReference type="GeneID" id="35803067"/>
<dbReference type="KEGG" id="cth:Cthe_2203"/>
<dbReference type="eggNOG" id="COG0302">
    <property type="taxonomic scope" value="Bacteria"/>
</dbReference>
<dbReference type="HOGENOM" id="CLU_049768_3_3_9"/>
<dbReference type="OrthoDB" id="9801207at2"/>
<dbReference type="UniPathway" id="UPA00848">
    <property type="reaction ID" value="UER00151"/>
</dbReference>
<dbReference type="Proteomes" id="UP000002145">
    <property type="component" value="Chromosome"/>
</dbReference>
<dbReference type="GO" id="GO:0005737">
    <property type="term" value="C:cytoplasm"/>
    <property type="evidence" value="ECO:0007669"/>
    <property type="project" value="TreeGrafter"/>
</dbReference>
<dbReference type="GO" id="GO:0005525">
    <property type="term" value="F:GTP binding"/>
    <property type="evidence" value="ECO:0007669"/>
    <property type="project" value="UniProtKB-KW"/>
</dbReference>
<dbReference type="GO" id="GO:0003934">
    <property type="term" value="F:GTP cyclohydrolase I activity"/>
    <property type="evidence" value="ECO:0007669"/>
    <property type="project" value="UniProtKB-UniRule"/>
</dbReference>
<dbReference type="GO" id="GO:0008270">
    <property type="term" value="F:zinc ion binding"/>
    <property type="evidence" value="ECO:0007669"/>
    <property type="project" value="UniProtKB-UniRule"/>
</dbReference>
<dbReference type="GO" id="GO:0006730">
    <property type="term" value="P:one-carbon metabolic process"/>
    <property type="evidence" value="ECO:0007669"/>
    <property type="project" value="UniProtKB-UniRule"/>
</dbReference>
<dbReference type="GO" id="GO:0006729">
    <property type="term" value="P:tetrahydrobiopterin biosynthetic process"/>
    <property type="evidence" value="ECO:0007669"/>
    <property type="project" value="TreeGrafter"/>
</dbReference>
<dbReference type="GO" id="GO:0046654">
    <property type="term" value="P:tetrahydrofolate biosynthetic process"/>
    <property type="evidence" value="ECO:0007669"/>
    <property type="project" value="UniProtKB-UniRule"/>
</dbReference>
<dbReference type="FunFam" id="1.10.286.10:FF:000001">
    <property type="entry name" value="GTP cyclohydrolase 1"/>
    <property type="match status" value="1"/>
</dbReference>
<dbReference type="FunFam" id="3.30.1130.10:FF:000001">
    <property type="entry name" value="GTP cyclohydrolase 1"/>
    <property type="match status" value="1"/>
</dbReference>
<dbReference type="Gene3D" id="1.10.286.10">
    <property type="match status" value="1"/>
</dbReference>
<dbReference type="Gene3D" id="3.30.1130.10">
    <property type="match status" value="1"/>
</dbReference>
<dbReference type="HAMAP" id="MF_00223">
    <property type="entry name" value="FolE"/>
    <property type="match status" value="1"/>
</dbReference>
<dbReference type="InterPro" id="IPR043133">
    <property type="entry name" value="GTP-CH-I_C/QueF"/>
</dbReference>
<dbReference type="InterPro" id="IPR043134">
    <property type="entry name" value="GTP-CH-I_N"/>
</dbReference>
<dbReference type="InterPro" id="IPR001474">
    <property type="entry name" value="GTP_CycHdrlase_I"/>
</dbReference>
<dbReference type="InterPro" id="IPR018234">
    <property type="entry name" value="GTP_CycHdrlase_I_CS"/>
</dbReference>
<dbReference type="InterPro" id="IPR020602">
    <property type="entry name" value="GTP_CycHdrlase_I_dom"/>
</dbReference>
<dbReference type="NCBIfam" id="TIGR00063">
    <property type="entry name" value="folE"/>
    <property type="match status" value="1"/>
</dbReference>
<dbReference type="NCBIfam" id="NF006825">
    <property type="entry name" value="PRK09347.1-2"/>
    <property type="match status" value="1"/>
</dbReference>
<dbReference type="NCBIfam" id="NF006826">
    <property type="entry name" value="PRK09347.1-3"/>
    <property type="match status" value="1"/>
</dbReference>
<dbReference type="PANTHER" id="PTHR11109:SF7">
    <property type="entry name" value="GTP CYCLOHYDROLASE 1"/>
    <property type="match status" value="1"/>
</dbReference>
<dbReference type="PANTHER" id="PTHR11109">
    <property type="entry name" value="GTP CYCLOHYDROLASE I"/>
    <property type="match status" value="1"/>
</dbReference>
<dbReference type="Pfam" id="PF01227">
    <property type="entry name" value="GTP_cyclohydroI"/>
    <property type="match status" value="1"/>
</dbReference>
<dbReference type="SUPFAM" id="SSF55620">
    <property type="entry name" value="Tetrahydrobiopterin biosynthesis enzymes-like"/>
    <property type="match status" value="1"/>
</dbReference>
<dbReference type="PROSITE" id="PS00859">
    <property type="entry name" value="GTP_CYCLOHYDROL_1_1"/>
    <property type="match status" value="1"/>
</dbReference>
<feature type="chain" id="PRO_1000043685" description="GTP cyclohydrolase 1">
    <location>
        <begin position="1"/>
        <end position="187"/>
    </location>
</feature>
<feature type="binding site" evidence="2">
    <location>
        <position position="76"/>
    </location>
    <ligand>
        <name>Zn(2+)</name>
        <dbReference type="ChEBI" id="CHEBI:29105"/>
    </ligand>
</feature>
<feature type="binding site" evidence="2">
    <location>
        <position position="79"/>
    </location>
    <ligand>
        <name>Zn(2+)</name>
        <dbReference type="ChEBI" id="CHEBI:29105"/>
    </ligand>
</feature>
<feature type="binding site" evidence="2">
    <location>
        <position position="148"/>
    </location>
    <ligand>
        <name>Zn(2+)</name>
        <dbReference type="ChEBI" id="CHEBI:29105"/>
    </ligand>
</feature>